<organism>
    <name type="scientific">Fusarium vanettenii (strain ATCC MYA-4622 / CBS 123669 / FGSC 9596 / NRRL 45880 / 77-13-4)</name>
    <name type="common">Fusarium solani subsp. pisi</name>
    <dbReference type="NCBI Taxonomy" id="660122"/>
    <lineage>
        <taxon>Eukaryota</taxon>
        <taxon>Fungi</taxon>
        <taxon>Dikarya</taxon>
        <taxon>Ascomycota</taxon>
        <taxon>Pezizomycotina</taxon>
        <taxon>Sordariomycetes</taxon>
        <taxon>Hypocreomycetidae</taxon>
        <taxon>Hypocreales</taxon>
        <taxon>Nectriaceae</taxon>
        <taxon>Fusarium</taxon>
        <taxon>Fusarium solani species complex</taxon>
        <taxon>Fusarium vanettenii</taxon>
    </lineage>
</organism>
<accession>C7YTD6</accession>
<proteinExistence type="inferred from homology"/>
<dbReference type="EMBL" id="GG698900">
    <property type="protein sequence ID" value="EEU44601.1"/>
    <property type="molecule type" value="Genomic_DNA"/>
</dbReference>
<dbReference type="RefSeq" id="XP_003050314.1">
    <property type="nucleotide sequence ID" value="XM_003050268.1"/>
</dbReference>
<dbReference type="SMR" id="C7YTD6"/>
<dbReference type="FunCoup" id="C7YTD6">
    <property type="interactions" value="1359"/>
</dbReference>
<dbReference type="STRING" id="660122.C7YTD6"/>
<dbReference type="EnsemblFungi" id="NechaT102798">
    <property type="protein sequence ID" value="NechaP102798"/>
    <property type="gene ID" value="NechaG102798"/>
</dbReference>
<dbReference type="GeneID" id="9665717"/>
<dbReference type="KEGG" id="nhe:NECHADRAFT_102798"/>
<dbReference type="VEuPathDB" id="FungiDB:NECHADRAFT_102798"/>
<dbReference type="eggNOG" id="KOG1628">
    <property type="taxonomic scope" value="Eukaryota"/>
</dbReference>
<dbReference type="HOGENOM" id="CLU_062507_0_0_1"/>
<dbReference type="InParanoid" id="C7YTD6"/>
<dbReference type="OMA" id="TRFKGHE"/>
<dbReference type="OrthoDB" id="9834376at2759"/>
<dbReference type="Proteomes" id="UP000005206">
    <property type="component" value="Unassembled WGS sequence"/>
</dbReference>
<dbReference type="GO" id="GO:0022627">
    <property type="term" value="C:cytosolic small ribosomal subunit"/>
    <property type="evidence" value="ECO:0007669"/>
    <property type="project" value="UniProtKB-UniRule"/>
</dbReference>
<dbReference type="GO" id="GO:0003735">
    <property type="term" value="F:structural constituent of ribosome"/>
    <property type="evidence" value="ECO:0007669"/>
    <property type="project" value="UniProtKB-UniRule"/>
</dbReference>
<dbReference type="GO" id="GO:0006412">
    <property type="term" value="P:translation"/>
    <property type="evidence" value="ECO:0007669"/>
    <property type="project" value="UniProtKB-UniRule"/>
</dbReference>
<dbReference type="HAMAP" id="MF_03122">
    <property type="entry name" value="Ribosomal_eS1_euk"/>
    <property type="match status" value="1"/>
</dbReference>
<dbReference type="InterPro" id="IPR001593">
    <property type="entry name" value="Ribosomal_eS1"/>
</dbReference>
<dbReference type="InterPro" id="IPR018281">
    <property type="entry name" value="Ribosomal_eS1_CS"/>
</dbReference>
<dbReference type="InterPro" id="IPR027500">
    <property type="entry name" value="Ribosomal_eS1_euk"/>
</dbReference>
<dbReference type="PANTHER" id="PTHR11830">
    <property type="entry name" value="40S RIBOSOMAL PROTEIN S3A"/>
    <property type="match status" value="1"/>
</dbReference>
<dbReference type="Pfam" id="PF01015">
    <property type="entry name" value="Ribosomal_S3Ae"/>
    <property type="match status" value="1"/>
</dbReference>
<dbReference type="SMART" id="SM01397">
    <property type="entry name" value="Ribosomal_S3Ae"/>
    <property type="match status" value="1"/>
</dbReference>
<dbReference type="PROSITE" id="PS01191">
    <property type="entry name" value="RIBOSOMAL_S3AE"/>
    <property type="match status" value="1"/>
</dbReference>
<protein>
    <recommendedName>
        <fullName evidence="1">Small ribosomal subunit protein eS1</fullName>
    </recommendedName>
    <alternativeName>
        <fullName evidence="2">40S ribosomal protein S1</fullName>
    </alternativeName>
</protein>
<sequence>MAVGKNKRLSKGKKGLKKKTVDPFTRKDWYSIKAPNPFNVRDVGKTLVNRTTGLKNANDALKGRIVEVSLADLQKDEDHAFRKVRLRVDEVQGKNCLTNFHGLDFTSDKLRSLVRKWQTLIEANVTVKTTDDYLIRLFAIAFTKRRPNQIKKTTYAASSQIRAIRRKMTDIIQREASSCTLTQLTSKLIPEVIGREIEKSTQGIYPLQNVHIRKVKLLKSPKFDLGALMALHGESGTDDQGQKVEREFKERVLEEV</sequence>
<name>RS3A_FUSV7</name>
<keyword id="KW-0007">Acetylation</keyword>
<keyword id="KW-0963">Cytoplasm</keyword>
<keyword id="KW-1185">Reference proteome</keyword>
<keyword id="KW-0687">Ribonucleoprotein</keyword>
<keyword id="KW-0689">Ribosomal protein</keyword>
<comment type="subunit">
    <text evidence="1">Component of the small ribosomal subunit. Mature ribosomes consist of a small (40S) and a large (60S) subunit. The 40S subunit contains about 33 different proteins and 1 molecule of RNA (18S). The 60S subunit contains about 49 different proteins and 3 molecules of RNA (25S, 5.8S and 5S).</text>
</comment>
<comment type="subcellular location">
    <subcellularLocation>
        <location evidence="1">Cytoplasm</location>
    </subcellularLocation>
</comment>
<comment type="similarity">
    <text evidence="1">Belongs to the eukaryotic ribosomal protein eS1 family.</text>
</comment>
<feature type="initiator methionine" description="Removed" evidence="1">
    <location>
        <position position="1"/>
    </location>
</feature>
<feature type="chain" id="PRO_0000389387" description="Small ribosomal subunit protein eS1">
    <location>
        <begin position="2"/>
        <end position="256"/>
    </location>
</feature>
<feature type="modified residue" description="N-acetylalanine; partial" evidence="1">
    <location>
        <position position="2"/>
    </location>
</feature>
<gene>
    <name evidence="1" type="primary">RPS1</name>
    <name type="ORF">NECHADRAFT_102798</name>
</gene>
<evidence type="ECO:0000255" key="1">
    <source>
        <dbReference type="HAMAP-Rule" id="MF_03122"/>
    </source>
</evidence>
<evidence type="ECO:0000305" key="2"/>
<reference key="1">
    <citation type="journal article" date="2009" name="PLoS Genet.">
        <title>The genome of Nectria haematococca: contribution of supernumerary chromosomes to gene expansion.</title>
        <authorList>
            <person name="Coleman J.J."/>
            <person name="Rounsley S.D."/>
            <person name="Rodriguez-Carres M."/>
            <person name="Kuo A."/>
            <person name="Wasmann C.C."/>
            <person name="Grimwood J."/>
            <person name="Schmutz J."/>
            <person name="Taga M."/>
            <person name="White G.J."/>
            <person name="Zhou S."/>
            <person name="Schwartz D.C."/>
            <person name="Freitag M."/>
            <person name="Ma L.-J."/>
            <person name="Danchin E.G.J."/>
            <person name="Henrissat B."/>
            <person name="Coutinho P.M."/>
            <person name="Nelson D.R."/>
            <person name="Straney D."/>
            <person name="Napoli C.A."/>
            <person name="Barker B.M."/>
            <person name="Gribskov M."/>
            <person name="Rep M."/>
            <person name="Kroken S."/>
            <person name="Molnar I."/>
            <person name="Rensing C."/>
            <person name="Kennell J.C."/>
            <person name="Zamora J."/>
            <person name="Farman M.L."/>
            <person name="Selker E.U."/>
            <person name="Salamov A."/>
            <person name="Shapiro H."/>
            <person name="Pangilinan J."/>
            <person name="Lindquist E."/>
            <person name="Lamers C."/>
            <person name="Grigoriev I.V."/>
            <person name="Geiser D.M."/>
            <person name="Covert S.F."/>
            <person name="Temporini E."/>
            <person name="VanEtten H.D."/>
        </authorList>
    </citation>
    <scope>NUCLEOTIDE SEQUENCE [LARGE SCALE GENOMIC DNA]</scope>
    <source>
        <strain>ATCC MYA-4622 / CBS 123669 / FGSC 9596 / NRRL 45880 / 77-13-4</strain>
    </source>
</reference>